<keyword id="KW-0963">Cytoplasm</keyword>
<keyword id="KW-0396">Initiation factor</keyword>
<keyword id="KW-0648">Protein biosynthesis</keyword>
<keyword id="KW-1185">Reference proteome</keyword>
<keyword id="KW-0694">RNA-binding</keyword>
<organism>
    <name type="scientific">Drosophila ananassae</name>
    <name type="common">Fruit fly</name>
    <dbReference type="NCBI Taxonomy" id="7217"/>
    <lineage>
        <taxon>Eukaryota</taxon>
        <taxon>Metazoa</taxon>
        <taxon>Ecdysozoa</taxon>
        <taxon>Arthropoda</taxon>
        <taxon>Hexapoda</taxon>
        <taxon>Insecta</taxon>
        <taxon>Pterygota</taxon>
        <taxon>Neoptera</taxon>
        <taxon>Endopterygota</taxon>
        <taxon>Diptera</taxon>
        <taxon>Brachycera</taxon>
        <taxon>Muscomorpha</taxon>
        <taxon>Ephydroidea</taxon>
        <taxon>Drosophilidae</taxon>
        <taxon>Drosophila</taxon>
        <taxon>Sophophora</taxon>
    </lineage>
</organism>
<accession>B3MSP2</accession>
<evidence type="ECO:0000250" key="1">
    <source>
        <dbReference type="UniProtKB" id="Q9VDM6"/>
    </source>
</evidence>
<evidence type="ECO:0000255" key="2">
    <source>
        <dbReference type="HAMAP-Rule" id="MF_03006"/>
    </source>
</evidence>
<name>EI3G2_DROAN</name>
<reference key="1">
    <citation type="journal article" date="2007" name="Nature">
        <title>Evolution of genes and genomes on the Drosophila phylogeny.</title>
        <authorList>
            <consortium name="Drosophila 12 genomes consortium"/>
        </authorList>
    </citation>
    <scope>NUCLEOTIDE SEQUENCE [LARGE SCALE GENOMIC DNA]</scope>
    <source>
        <strain>Tucson 14024-0371.13</strain>
    </source>
</reference>
<comment type="function">
    <text evidence="2">RNA-binding component of the eukaryotic translation initiation factor 3 (eIF-3) complex, which is involved in protein synthesis of a specialized repertoire of mRNAs and, together with other initiation factors, stimulates binding of mRNA and methionyl-tRNAi to the 40S ribosome. The eIF-3 complex specifically targets and initiates translation of a subset of mRNAs involved in cell proliferation. This subunit can bind 18S rRNA.</text>
</comment>
<comment type="subunit">
    <text evidence="2">Component of the eukaryotic translation initiation factor 3 (eIF-3) complex. The eIF-3 complex interacts with pix.</text>
</comment>
<comment type="subcellular location">
    <subcellularLocation>
        <location evidence="2">Cytoplasm</location>
    </subcellularLocation>
</comment>
<comment type="similarity">
    <text evidence="2">Belongs to the eIF-3 subunit G family.</text>
</comment>
<feature type="chain" id="PRO_0000365408" description="Eukaryotic translation initiation factor 3 subunit G-2">
    <location>
        <begin position="1"/>
        <end position="269"/>
    </location>
</feature>
<feature type="domain" description="RRM" evidence="2">
    <location>
        <begin position="189"/>
        <end position="267"/>
    </location>
</feature>
<dbReference type="EMBL" id="CH902623">
    <property type="protein sequence ID" value="EDV30282.1"/>
    <property type="molecule type" value="Genomic_DNA"/>
</dbReference>
<dbReference type="SMR" id="B3MSP2"/>
<dbReference type="FunCoup" id="B3MSP2">
    <property type="interactions" value="1147"/>
</dbReference>
<dbReference type="STRING" id="7217.B3MSP2"/>
<dbReference type="EnsemblMetazoa" id="FBtr0127728">
    <property type="protein sequence ID" value="FBpp0126220"/>
    <property type="gene ID" value="FBgn0100022"/>
</dbReference>
<dbReference type="EnsemblMetazoa" id="XM_001964450.3">
    <property type="protein sequence ID" value="XP_001964486.1"/>
    <property type="gene ID" value="LOC6505674"/>
</dbReference>
<dbReference type="GeneID" id="6505674"/>
<dbReference type="KEGG" id="dan:6505674"/>
<dbReference type="CTD" id="42422"/>
<dbReference type="eggNOG" id="KOG0122">
    <property type="taxonomic scope" value="Eukaryota"/>
</dbReference>
<dbReference type="HOGENOM" id="CLU_034595_0_0_1"/>
<dbReference type="InParanoid" id="B3MSP2"/>
<dbReference type="OMA" id="EEVHMVF"/>
<dbReference type="OrthoDB" id="639027at2759"/>
<dbReference type="PhylomeDB" id="B3MSP2"/>
<dbReference type="Proteomes" id="UP000007801">
    <property type="component" value="Unassembled WGS sequence"/>
</dbReference>
<dbReference type="GO" id="GO:0016282">
    <property type="term" value="C:eukaryotic 43S preinitiation complex"/>
    <property type="evidence" value="ECO:0007669"/>
    <property type="project" value="UniProtKB-UniRule"/>
</dbReference>
<dbReference type="GO" id="GO:0033290">
    <property type="term" value="C:eukaryotic 48S preinitiation complex"/>
    <property type="evidence" value="ECO:0007669"/>
    <property type="project" value="UniProtKB-UniRule"/>
</dbReference>
<dbReference type="GO" id="GO:0005852">
    <property type="term" value="C:eukaryotic translation initiation factor 3 complex"/>
    <property type="evidence" value="ECO:0007669"/>
    <property type="project" value="UniProtKB-UniRule"/>
</dbReference>
<dbReference type="GO" id="GO:0003723">
    <property type="term" value="F:RNA binding"/>
    <property type="evidence" value="ECO:0007669"/>
    <property type="project" value="UniProtKB-UniRule"/>
</dbReference>
<dbReference type="GO" id="GO:0003743">
    <property type="term" value="F:translation initiation factor activity"/>
    <property type="evidence" value="ECO:0007669"/>
    <property type="project" value="UniProtKB-UniRule"/>
</dbReference>
<dbReference type="GO" id="GO:0001732">
    <property type="term" value="P:formation of cytoplasmic translation initiation complex"/>
    <property type="evidence" value="ECO:0007669"/>
    <property type="project" value="UniProtKB-UniRule"/>
</dbReference>
<dbReference type="CDD" id="cd12933">
    <property type="entry name" value="eIF3G"/>
    <property type="match status" value="1"/>
</dbReference>
<dbReference type="CDD" id="cd12408">
    <property type="entry name" value="RRM_eIF3G_like"/>
    <property type="match status" value="1"/>
</dbReference>
<dbReference type="FunFam" id="3.30.70.330:FF:000828">
    <property type="entry name" value="Eukaryotic translation initiation factor 3 subunit G"/>
    <property type="match status" value="1"/>
</dbReference>
<dbReference type="Gene3D" id="3.30.70.330">
    <property type="match status" value="1"/>
</dbReference>
<dbReference type="HAMAP" id="MF_03006">
    <property type="entry name" value="eIF3g"/>
    <property type="match status" value="1"/>
</dbReference>
<dbReference type="InterPro" id="IPR017334">
    <property type="entry name" value="eIF3_g"/>
</dbReference>
<dbReference type="InterPro" id="IPR024675">
    <property type="entry name" value="eIF3g_N"/>
</dbReference>
<dbReference type="InterPro" id="IPR034240">
    <property type="entry name" value="eIF3G_RRM"/>
</dbReference>
<dbReference type="InterPro" id="IPR012677">
    <property type="entry name" value="Nucleotide-bd_a/b_plait_sf"/>
</dbReference>
<dbReference type="InterPro" id="IPR035979">
    <property type="entry name" value="RBD_domain_sf"/>
</dbReference>
<dbReference type="InterPro" id="IPR000504">
    <property type="entry name" value="RRM_dom"/>
</dbReference>
<dbReference type="PANTHER" id="PTHR10352">
    <property type="entry name" value="EUKARYOTIC TRANSLATION INITIATION FACTOR 3 SUBUNIT G"/>
    <property type="match status" value="1"/>
</dbReference>
<dbReference type="Pfam" id="PF12353">
    <property type="entry name" value="eIF3g"/>
    <property type="match status" value="1"/>
</dbReference>
<dbReference type="Pfam" id="PF00076">
    <property type="entry name" value="RRM_1"/>
    <property type="match status" value="1"/>
</dbReference>
<dbReference type="PIRSF" id="PIRSF037949">
    <property type="entry name" value="Transl_init_eIF-3_RNA-bind"/>
    <property type="match status" value="1"/>
</dbReference>
<dbReference type="SMART" id="SM00360">
    <property type="entry name" value="RRM"/>
    <property type="match status" value="1"/>
</dbReference>
<dbReference type="SUPFAM" id="SSF54928">
    <property type="entry name" value="RNA-binding domain, RBD"/>
    <property type="match status" value="1"/>
</dbReference>
<dbReference type="PROSITE" id="PS50102">
    <property type="entry name" value="RRM"/>
    <property type="match status" value="1"/>
</dbReference>
<proteinExistence type="inferred from homology"/>
<sequence>MKPFKTSWADEVEADYVDGLPPCSEYIEGDYKYVTEYKFNDDGKKVKVVRTFKIEKQVVSKAVARRRGWVKFGDSRLDKPGPNSQTTMASEEIFMLFMGSKEFEQTHETQMDAGKNIAKCRICNGEHWSVNCPYKGTSMDSKTLMESKANAAAAAALNDPSKPGKYVPPFMKDGAGGAGGKGRERDDSSAVRISNLSESMTETDLEELVKKIGPHTKMYLAREKNTGLCKGFAYVHFKFRQDAAAAIEILNGHGYDHLILCVEWSKPQP</sequence>
<protein>
    <recommendedName>
        <fullName evidence="1">Eukaryotic translation initiation factor 3 subunit G-2</fullName>
    </recommendedName>
    <alternativeName>
        <fullName evidence="2">Eukaryotic translation initiation factor 3 RNA-binding subunit-2</fullName>
        <shortName evidence="2">eIF-3 RNA-binding subunit 2</shortName>
    </alternativeName>
    <alternativeName>
        <fullName evidence="2">Eukaryotic translation initiation factor 3 subunit 4-2</fullName>
    </alternativeName>
</protein>
<gene>
    <name evidence="1" type="primary">eIF3g2</name>
    <name evidence="2" type="synonym">eIF3-S4</name>
    <name evidence="1" type="synonym">eIF3gb</name>
    <name type="ORF">GF23028</name>
</gene>